<comment type="function">
    <text evidence="1">Involved in beta-(1--&gt;2)glucan export. Transmembrane domains (TMD) form a pore in the inner membrane and the ATP-binding domain (NBD) is responsible for energy generation (By similarity).</text>
</comment>
<comment type="catalytic activity">
    <reaction evidence="2">
        <text>[(1-&gt;2)-beta-D-glucosyl](n)(in) + ATP + H2O = [(1-&gt;2)-beta-D-glucosyl](n)(out) + ADP + phosphate + H(+)</text>
        <dbReference type="Rhea" id="RHEA:18453"/>
        <dbReference type="Rhea" id="RHEA-COMP:11881"/>
        <dbReference type="ChEBI" id="CHEBI:15377"/>
        <dbReference type="ChEBI" id="CHEBI:15378"/>
        <dbReference type="ChEBI" id="CHEBI:27517"/>
        <dbReference type="ChEBI" id="CHEBI:30616"/>
        <dbReference type="ChEBI" id="CHEBI:43474"/>
        <dbReference type="ChEBI" id="CHEBI:456216"/>
        <dbReference type="EC" id="7.5.2.3"/>
    </reaction>
</comment>
<comment type="subunit">
    <text evidence="2">Homodimer.</text>
</comment>
<comment type="subcellular location">
    <subcellularLocation>
        <location evidence="2">Cell inner membrane</location>
        <topology evidence="2">Multi-pass membrane protein</topology>
    </subcellularLocation>
</comment>
<comment type="domain">
    <text>In NdvA the ATP-binding domain (NBD) and the transmembrane domain (TMD) are fused.</text>
</comment>
<comment type="similarity">
    <text evidence="2">Belongs to the ABC transporter superfamily. Beta-(1--&gt;2)glucan exporter (TC 3.A.1.108.1) family.</text>
</comment>
<keyword id="KW-0067">ATP-binding</keyword>
<keyword id="KW-0997">Cell inner membrane</keyword>
<keyword id="KW-1003">Cell membrane</keyword>
<keyword id="KW-0472">Membrane</keyword>
<keyword id="KW-0547">Nucleotide-binding</keyword>
<keyword id="KW-0762">Sugar transport</keyword>
<keyword id="KW-1278">Translocase</keyword>
<keyword id="KW-0812">Transmembrane</keyword>
<keyword id="KW-1133">Transmembrane helix</keyword>
<keyword id="KW-0813">Transport</keyword>
<gene>
    <name evidence="2" type="primary">ndvA</name>
    <name type="ordered locus">BARBAKC583_0729</name>
</gene>
<feature type="chain" id="PRO_0000290240" description="Beta-(1--&gt;2)glucan export ATP-binding/permease protein NdvA">
    <location>
        <begin position="1"/>
        <end position="595"/>
    </location>
</feature>
<feature type="transmembrane region" description="Helical" evidence="2">
    <location>
        <begin position="21"/>
        <end position="41"/>
    </location>
</feature>
<feature type="transmembrane region" description="Helical" evidence="2">
    <location>
        <begin position="56"/>
        <end position="76"/>
    </location>
</feature>
<feature type="transmembrane region" description="Helical" evidence="2">
    <location>
        <begin position="129"/>
        <end position="149"/>
    </location>
</feature>
<feature type="transmembrane region" description="Helical" evidence="2">
    <location>
        <begin position="158"/>
        <end position="178"/>
    </location>
</feature>
<feature type="transmembrane region" description="Helical" evidence="2">
    <location>
        <begin position="252"/>
        <end position="272"/>
    </location>
</feature>
<feature type="domain" description="ABC transmembrane type-1" evidence="2">
    <location>
        <begin position="21"/>
        <end position="301"/>
    </location>
</feature>
<feature type="domain" description="ABC transporter" evidence="2">
    <location>
        <begin position="335"/>
        <end position="569"/>
    </location>
</feature>
<feature type="binding site" evidence="2">
    <location>
        <begin position="368"/>
        <end position="375"/>
    </location>
    <ligand>
        <name>ATP</name>
        <dbReference type="ChEBI" id="CHEBI:30616"/>
    </ligand>
</feature>
<sequence length="595" mass="66160">MSLFRTYVRVLSYLNQEKNAFLLICTANITLAIITIAEPILFGHVIDTIADKSDTLVTLAVWMCFGISNIIAYVLVARGADRLAHRCRLTVLEKSFARIISMPLIWHQQRGTSHALHTLLRATDSMSSIWLEFMRQHLSTFVALFVLVPVTFKMNWRLSIVLMVLAILYILIARLVMQKTKNGQAAVEHYHHNLFKHITDSISNVSIVQSYNRITEETSALHQHTNNLLSAQTPVLNWWALASGLNRMASTISIVCVLLLGAFFVIKGQLSVGEVVTFVGFSQLMIGRLDQISGFINLAVSSQAKLQEFFDMEDSTFQTNEPANLPSLPNVKGAIQFHHVTYEFPNSSQGVFDISFEVKAGQTVAIVGPTGAGKTTLINLLQRVYDPTVGYISIDGININSINRESLRKALATVFQDAGLFDRTIRDNISIGKTGATDEELYEATKTASAHDFILKKSKNYDTLVGERGSQLSGGERQRLAIARAILKNAPILILDEATSALDVETEIRVKNAIDCISQNRTTFIIAHRLSTIRNADLVLFLDQGRLIEKGSFQELINKDGHFYKLLKAGGLTINQPATKEKDDNIIPLRKAMAL</sequence>
<dbReference type="EC" id="7.5.2.3" evidence="2"/>
<dbReference type="EMBL" id="CP000524">
    <property type="protein sequence ID" value="ABM44826.1"/>
    <property type="molecule type" value="Genomic_DNA"/>
</dbReference>
<dbReference type="SMR" id="A1USS5"/>
<dbReference type="STRING" id="360095.BARBAKC583_0729"/>
<dbReference type="KEGG" id="bbk:BARBAKC583_0729"/>
<dbReference type="eggNOG" id="COG1132">
    <property type="taxonomic scope" value="Bacteria"/>
</dbReference>
<dbReference type="HOGENOM" id="CLU_000604_84_3_5"/>
<dbReference type="OrthoDB" id="9804259at2"/>
<dbReference type="Proteomes" id="UP000000643">
    <property type="component" value="Chromosome"/>
</dbReference>
<dbReference type="GO" id="GO:0005886">
    <property type="term" value="C:plasma membrane"/>
    <property type="evidence" value="ECO:0007669"/>
    <property type="project" value="UniProtKB-SubCell"/>
</dbReference>
<dbReference type="GO" id="GO:0015441">
    <property type="term" value="F:ABC-type beta-glucan transporter activity"/>
    <property type="evidence" value="ECO:0007669"/>
    <property type="project" value="UniProtKB-EC"/>
</dbReference>
<dbReference type="GO" id="GO:0015421">
    <property type="term" value="F:ABC-type oligopeptide transporter activity"/>
    <property type="evidence" value="ECO:0007669"/>
    <property type="project" value="TreeGrafter"/>
</dbReference>
<dbReference type="GO" id="GO:0005524">
    <property type="term" value="F:ATP binding"/>
    <property type="evidence" value="ECO:0007669"/>
    <property type="project" value="UniProtKB-KW"/>
</dbReference>
<dbReference type="GO" id="GO:0016887">
    <property type="term" value="F:ATP hydrolysis activity"/>
    <property type="evidence" value="ECO:0007669"/>
    <property type="project" value="InterPro"/>
</dbReference>
<dbReference type="CDD" id="cd18562">
    <property type="entry name" value="ABC_6TM_NdvA_beta-glucan_exporter_like"/>
    <property type="match status" value="1"/>
</dbReference>
<dbReference type="FunFam" id="3.40.50.300:FF:000221">
    <property type="entry name" value="Multidrug ABC transporter ATP-binding protein"/>
    <property type="match status" value="1"/>
</dbReference>
<dbReference type="Gene3D" id="1.20.1560.10">
    <property type="entry name" value="ABC transporter type 1, transmembrane domain"/>
    <property type="match status" value="1"/>
</dbReference>
<dbReference type="Gene3D" id="3.40.50.300">
    <property type="entry name" value="P-loop containing nucleotide triphosphate hydrolases"/>
    <property type="match status" value="1"/>
</dbReference>
<dbReference type="InterPro" id="IPR003593">
    <property type="entry name" value="AAA+_ATPase"/>
</dbReference>
<dbReference type="InterPro" id="IPR011527">
    <property type="entry name" value="ABC1_TM_dom"/>
</dbReference>
<dbReference type="InterPro" id="IPR036640">
    <property type="entry name" value="ABC1_TM_sf"/>
</dbReference>
<dbReference type="InterPro" id="IPR003439">
    <property type="entry name" value="ABC_transporter-like_ATP-bd"/>
</dbReference>
<dbReference type="InterPro" id="IPR017871">
    <property type="entry name" value="ABC_transporter-like_CS"/>
</dbReference>
<dbReference type="InterPro" id="IPR005896">
    <property type="entry name" value="NdvA"/>
</dbReference>
<dbReference type="InterPro" id="IPR027417">
    <property type="entry name" value="P-loop_NTPase"/>
</dbReference>
<dbReference type="InterPro" id="IPR039421">
    <property type="entry name" value="Type_1_exporter"/>
</dbReference>
<dbReference type="NCBIfam" id="TIGR01192">
    <property type="entry name" value="chvA"/>
    <property type="match status" value="1"/>
</dbReference>
<dbReference type="NCBIfam" id="NF010178">
    <property type="entry name" value="PRK13657.1"/>
    <property type="match status" value="1"/>
</dbReference>
<dbReference type="PANTHER" id="PTHR43394:SF1">
    <property type="entry name" value="ATP-BINDING CASSETTE SUB-FAMILY B MEMBER 10, MITOCHONDRIAL"/>
    <property type="match status" value="1"/>
</dbReference>
<dbReference type="PANTHER" id="PTHR43394">
    <property type="entry name" value="ATP-DEPENDENT PERMEASE MDL1, MITOCHONDRIAL"/>
    <property type="match status" value="1"/>
</dbReference>
<dbReference type="Pfam" id="PF00664">
    <property type="entry name" value="ABC_membrane"/>
    <property type="match status" value="1"/>
</dbReference>
<dbReference type="Pfam" id="PF00005">
    <property type="entry name" value="ABC_tran"/>
    <property type="match status" value="1"/>
</dbReference>
<dbReference type="SMART" id="SM00382">
    <property type="entry name" value="AAA"/>
    <property type="match status" value="1"/>
</dbReference>
<dbReference type="SUPFAM" id="SSF90123">
    <property type="entry name" value="ABC transporter transmembrane region"/>
    <property type="match status" value="1"/>
</dbReference>
<dbReference type="SUPFAM" id="SSF52540">
    <property type="entry name" value="P-loop containing nucleoside triphosphate hydrolases"/>
    <property type="match status" value="1"/>
</dbReference>
<dbReference type="PROSITE" id="PS50929">
    <property type="entry name" value="ABC_TM1F"/>
    <property type="match status" value="1"/>
</dbReference>
<dbReference type="PROSITE" id="PS00211">
    <property type="entry name" value="ABC_TRANSPORTER_1"/>
    <property type="match status" value="1"/>
</dbReference>
<dbReference type="PROSITE" id="PS50893">
    <property type="entry name" value="ABC_TRANSPORTER_2"/>
    <property type="match status" value="1"/>
</dbReference>
<dbReference type="PROSITE" id="PS51317">
    <property type="entry name" value="NDVA"/>
    <property type="match status" value="1"/>
</dbReference>
<name>NDVA_BARBK</name>
<organism>
    <name type="scientific">Bartonella bacilliformis (strain ATCC 35685 / KC583 / Herrer 020/F12,63)</name>
    <dbReference type="NCBI Taxonomy" id="360095"/>
    <lineage>
        <taxon>Bacteria</taxon>
        <taxon>Pseudomonadati</taxon>
        <taxon>Pseudomonadota</taxon>
        <taxon>Alphaproteobacteria</taxon>
        <taxon>Hyphomicrobiales</taxon>
        <taxon>Bartonellaceae</taxon>
        <taxon>Bartonella</taxon>
    </lineage>
</organism>
<evidence type="ECO:0000250" key="1"/>
<evidence type="ECO:0000255" key="2">
    <source>
        <dbReference type="HAMAP-Rule" id="MF_01728"/>
    </source>
</evidence>
<reference key="1">
    <citation type="submission" date="2006-12" db="EMBL/GenBank/DDBJ databases">
        <authorList>
            <person name="Hendrix L."/>
            <person name="Mohamoud Y."/>
            <person name="Radune D."/>
            <person name="Shvartsbeyn A."/>
            <person name="Daugherty S."/>
            <person name="Dodson R."/>
            <person name="Durkin A.S."/>
            <person name="Harkins D."/>
            <person name="Huot H."/>
            <person name="Kothari S.P."/>
            <person name="Madupu R."/>
            <person name="Li J."/>
            <person name="Nelson W.C."/>
            <person name="Shrivastava S."/>
            <person name="Giglio M.G."/>
            <person name="Haft D."/>
            <person name="Selengut J."/>
            <person name="Fraser-Ligget C."/>
            <person name="Seshadri R."/>
        </authorList>
    </citation>
    <scope>NUCLEOTIDE SEQUENCE [LARGE SCALE GENOMIC DNA]</scope>
    <source>
        <strain>ATCC 35685 / KC583 / Herrer 020/F12,63</strain>
    </source>
</reference>
<proteinExistence type="inferred from homology"/>
<accession>A1USS5</accession>
<protein>
    <recommendedName>
        <fullName evidence="2">Beta-(1--&gt;2)glucan export ATP-binding/permease protein NdvA</fullName>
        <ecNumber evidence="2">7.5.2.3</ecNumber>
    </recommendedName>
</protein>